<protein>
    <recommendedName>
        <fullName evidence="1">1-deoxy-D-xylulose-5-phosphate synthase</fullName>
        <ecNumber evidence="1">2.2.1.7</ecNumber>
    </recommendedName>
    <alternativeName>
        <fullName evidence="1">1-deoxyxylulose-5-phosphate synthase</fullName>
        <shortName evidence="1">DXP synthase</shortName>
        <shortName evidence="1">DXPS</shortName>
    </alternativeName>
</protein>
<evidence type="ECO:0000255" key="1">
    <source>
        <dbReference type="HAMAP-Rule" id="MF_00315"/>
    </source>
</evidence>
<proteinExistence type="inferred from homology"/>
<feature type="chain" id="PRO_1000132931" description="1-deoxy-D-xylulose-5-phosphate synthase">
    <location>
        <begin position="1"/>
        <end position="629"/>
    </location>
</feature>
<feature type="binding site" evidence="1">
    <location>
        <position position="78"/>
    </location>
    <ligand>
        <name>thiamine diphosphate</name>
        <dbReference type="ChEBI" id="CHEBI:58937"/>
    </ligand>
</feature>
<feature type="binding site" evidence="1">
    <location>
        <begin position="119"/>
        <end position="121"/>
    </location>
    <ligand>
        <name>thiamine diphosphate</name>
        <dbReference type="ChEBI" id="CHEBI:58937"/>
    </ligand>
</feature>
<feature type="binding site" evidence="1">
    <location>
        <position position="150"/>
    </location>
    <ligand>
        <name>Mg(2+)</name>
        <dbReference type="ChEBI" id="CHEBI:18420"/>
    </ligand>
</feature>
<feature type="binding site" evidence="1">
    <location>
        <begin position="151"/>
        <end position="152"/>
    </location>
    <ligand>
        <name>thiamine diphosphate</name>
        <dbReference type="ChEBI" id="CHEBI:58937"/>
    </ligand>
</feature>
<feature type="binding site" evidence="1">
    <location>
        <position position="179"/>
    </location>
    <ligand>
        <name>Mg(2+)</name>
        <dbReference type="ChEBI" id="CHEBI:18420"/>
    </ligand>
</feature>
<feature type="binding site" evidence="1">
    <location>
        <position position="179"/>
    </location>
    <ligand>
        <name>thiamine diphosphate</name>
        <dbReference type="ChEBI" id="CHEBI:58937"/>
    </ligand>
</feature>
<feature type="binding site" evidence="1">
    <location>
        <position position="286"/>
    </location>
    <ligand>
        <name>thiamine diphosphate</name>
        <dbReference type="ChEBI" id="CHEBI:58937"/>
    </ligand>
</feature>
<feature type="binding site" evidence="1">
    <location>
        <position position="368"/>
    </location>
    <ligand>
        <name>thiamine diphosphate</name>
        <dbReference type="ChEBI" id="CHEBI:58937"/>
    </ligand>
</feature>
<organism>
    <name type="scientific">Acidovorax ebreus (strain TPSY)</name>
    <name type="common">Diaphorobacter sp. (strain TPSY)</name>
    <dbReference type="NCBI Taxonomy" id="535289"/>
    <lineage>
        <taxon>Bacteria</taxon>
        <taxon>Pseudomonadati</taxon>
        <taxon>Pseudomonadota</taxon>
        <taxon>Betaproteobacteria</taxon>
        <taxon>Burkholderiales</taxon>
        <taxon>Comamonadaceae</taxon>
        <taxon>Diaphorobacter</taxon>
    </lineage>
</organism>
<gene>
    <name evidence="1" type="primary">dxs</name>
    <name type="ordered locus">Dtpsy_0956</name>
</gene>
<accession>B9MEU8</accession>
<keyword id="KW-0414">Isoprene biosynthesis</keyword>
<keyword id="KW-0460">Magnesium</keyword>
<keyword id="KW-0479">Metal-binding</keyword>
<keyword id="KW-1185">Reference proteome</keyword>
<keyword id="KW-0784">Thiamine biosynthesis</keyword>
<keyword id="KW-0786">Thiamine pyrophosphate</keyword>
<keyword id="KW-0808">Transferase</keyword>
<reference key="1">
    <citation type="submission" date="2009-01" db="EMBL/GenBank/DDBJ databases">
        <title>Complete sequence of Diaphorobacter sp. TPSY.</title>
        <authorList>
            <consortium name="US DOE Joint Genome Institute"/>
            <person name="Lucas S."/>
            <person name="Copeland A."/>
            <person name="Lapidus A."/>
            <person name="Glavina del Rio T."/>
            <person name="Tice H."/>
            <person name="Bruce D."/>
            <person name="Goodwin L."/>
            <person name="Pitluck S."/>
            <person name="Chertkov O."/>
            <person name="Brettin T."/>
            <person name="Detter J.C."/>
            <person name="Han C."/>
            <person name="Larimer F."/>
            <person name="Land M."/>
            <person name="Hauser L."/>
            <person name="Kyrpides N."/>
            <person name="Mikhailova N."/>
            <person name="Coates J.D."/>
        </authorList>
    </citation>
    <scope>NUCLEOTIDE SEQUENCE [LARGE SCALE GENOMIC DNA]</scope>
    <source>
        <strain>TPSY</strain>
    </source>
</reference>
<sequence>MSTTNYPLLERVNDPADLRRLPRAELKALATELRAFVLESVSKTGGHLSSNLGTVELTVALHAVFDTPRDRLVWDVGHQTYPHKILTGRRDRMPSLRQLGGLSGFPQRAESEYDTFGTAHSSTSISAALGMALAAKQRGDERRCVAIIGDGAMTAGMAFEALNNAGVADANLLVILNDNDMSISPPVGALNRYLAQLMSGQFYAKARDVGKSVLKNAPPLLELAKRLEQQAKGMVVPATLFEKFGFNYIGPIDGHDLDSLIPTLENIRGLKGPQFLHVVTKKGQGYKLAEADPVAYHGPGKFDPRVGLVKPATPPKQTFTQVFGQWLCDMAEKDERLVGITPAMREGSGMVEFHQRFPERYYDVGIAEQHAVTFAAGMACEGAKPVVAIYSTFLQRAYDQLIHDVALQNLPVVFALDRAGLVGADGATHAGAYDIAFVRCIPNMSMACPADERECRQLLTTAYEQDHPVAVRYPRGAGVGVAPLPDLEGLPFGKGEVRRKGRRMAILAFGTLLYPALQAAEALDATVVNMRWAKPLDTQLLLQVAAEHDALVTVEEGCIMGGAGSAVAEALAAAGVQRPLLQLGLPDAFIEHGDPAKLLALQGLDAAGMQRSITERFGALPGEQALAAA</sequence>
<comment type="function">
    <text evidence="1">Catalyzes the acyloin condensation reaction between C atoms 2 and 3 of pyruvate and glyceraldehyde 3-phosphate to yield 1-deoxy-D-xylulose-5-phosphate (DXP).</text>
</comment>
<comment type="catalytic activity">
    <reaction evidence="1">
        <text>D-glyceraldehyde 3-phosphate + pyruvate + H(+) = 1-deoxy-D-xylulose 5-phosphate + CO2</text>
        <dbReference type="Rhea" id="RHEA:12605"/>
        <dbReference type="ChEBI" id="CHEBI:15361"/>
        <dbReference type="ChEBI" id="CHEBI:15378"/>
        <dbReference type="ChEBI" id="CHEBI:16526"/>
        <dbReference type="ChEBI" id="CHEBI:57792"/>
        <dbReference type="ChEBI" id="CHEBI:59776"/>
        <dbReference type="EC" id="2.2.1.7"/>
    </reaction>
</comment>
<comment type="cofactor">
    <cofactor evidence="1">
        <name>Mg(2+)</name>
        <dbReference type="ChEBI" id="CHEBI:18420"/>
    </cofactor>
    <text evidence="1">Binds 1 Mg(2+) ion per subunit.</text>
</comment>
<comment type="cofactor">
    <cofactor evidence="1">
        <name>thiamine diphosphate</name>
        <dbReference type="ChEBI" id="CHEBI:58937"/>
    </cofactor>
    <text evidence="1">Binds 1 thiamine pyrophosphate per subunit.</text>
</comment>
<comment type="pathway">
    <text evidence="1">Metabolic intermediate biosynthesis; 1-deoxy-D-xylulose 5-phosphate biosynthesis; 1-deoxy-D-xylulose 5-phosphate from D-glyceraldehyde 3-phosphate and pyruvate: step 1/1.</text>
</comment>
<comment type="subunit">
    <text evidence="1">Homodimer.</text>
</comment>
<comment type="similarity">
    <text evidence="1">Belongs to the transketolase family. DXPS subfamily.</text>
</comment>
<name>DXS_ACIET</name>
<dbReference type="EC" id="2.2.1.7" evidence="1"/>
<dbReference type="EMBL" id="CP001392">
    <property type="protein sequence ID" value="ACM32434.1"/>
    <property type="molecule type" value="Genomic_DNA"/>
</dbReference>
<dbReference type="RefSeq" id="WP_015912685.1">
    <property type="nucleotide sequence ID" value="NC_011992.1"/>
</dbReference>
<dbReference type="SMR" id="B9MEU8"/>
<dbReference type="KEGG" id="dia:Dtpsy_0956"/>
<dbReference type="eggNOG" id="COG1154">
    <property type="taxonomic scope" value="Bacteria"/>
</dbReference>
<dbReference type="HOGENOM" id="CLU_009227_1_4_4"/>
<dbReference type="UniPathway" id="UPA00064">
    <property type="reaction ID" value="UER00091"/>
</dbReference>
<dbReference type="Proteomes" id="UP000000450">
    <property type="component" value="Chromosome"/>
</dbReference>
<dbReference type="GO" id="GO:0005829">
    <property type="term" value="C:cytosol"/>
    <property type="evidence" value="ECO:0007669"/>
    <property type="project" value="TreeGrafter"/>
</dbReference>
<dbReference type="GO" id="GO:0008661">
    <property type="term" value="F:1-deoxy-D-xylulose-5-phosphate synthase activity"/>
    <property type="evidence" value="ECO:0007669"/>
    <property type="project" value="UniProtKB-UniRule"/>
</dbReference>
<dbReference type="GO" id="GO:0000287">
    <property type="term" value="F:magnesium ion binding"/>
    <property type="evidence" value="ECO:0007669"/>
    <property type="project" value="UniProtKB-UniRule"/>
</dbReference>
<dbReference type="GO" id="GO:0030976">
    <property type="term" value="F:thiamine pyrophosphate binding"/>
    <property type="evidence" value="ECO:0007669"/>
    <property type="project" value="UniProtKB-UniRule"/>
</dbReference>
<dbReference type="GO" id="GO:0052865">
    <property type="term" value="P:1-deoxy-D-xylulose 5-phosphate biosynthetic process"/>
    <property type="evidence" value="ECO:0007669"/>
    <property type="project" value="UniProtKB-UniPathway"/>
</dbReference>
<dbReference type="GO" id="GO:0019288">
    <property type="term" value="P:isopentenyl diphosphate biosynthetic process, methylerythritol 4-phosphate pathway"/>
    <property type="evidence" value="ECO:0007669"/>
    <property type="project" value="TreeGrafter"/>
</dbReference>
<dbReference type="GO" id="GO:0016114">
    <property type="term" value="P:terpenoid biosynthetic process"/>
    <property type="evidence" value="ECO:0007669"/>
    <property type="project" value="UniProtKB-UniRule"/>
</dbReference>
<dbReference type="GO" id="GO:0009228">
    <property type="term" value="P:thiamine biosynthetic process"/>
    <property type="evidence" value="ECO:0007669"/>
    <property type="project" value="UniProtKB-UniRule"/>
</dbReference>
<dbReference type="CDD" id="cd02007">
    <property type="entry name" value="TPP_DXS"/>
    <property type="match status" value="1"/>
</dbReference>
<dbReference type="CDD" id="cd07033">
    <property type="entry name" value="TPP_PYR_DXS_TK_like"/>
    <property type="match status" value="1"/>
</dbReference>
<dbReference type="FunFam" id="3.40.50.920:FF:000002">
    <property type="entry name" value="1-deoxy-D-xylulose-5-phosphate synthase"/>
    <property type="match status" value="1"/>
</dbReference>
<dbReference type="FunFam" id="3.40.50.970:FF:000005">
    <property type="entry name" value="1-deoxy-D-xylulose-5-phosphate synthase"/>
    <property type="match status" value="1"/>
</dbReference>
<dbReference type="Gene3D" id="3.40.50.920">
    <property type="match status" value="1"/>
</dbReference>
<dbReference type="Gene3D" id="3.40.50.970">
    <property type="match status" value="2"/>
</dbReference>
<dbReference type="HAMAP" id="MF_00315">
    <property type="entry name" value="DXP_synth"/>
    <property type="match status" value="1"/>
</dbReference>
<dbReference type="InterPro" id="IPR005477">
    <property type="entry name" value="Dxylulose-5-P_synthase"/>
</dbReference>
<dbReference type="InterPro" id="IPR029061">
    <property type="entry name" value="THDP-binding"/>
</dbReference>
<dbReference type="InterPro" id="IPR009014">
    <property type="entry name" value="Transketo_C/PFOR_II"/>
</dbReference>
<dbReference type="InterPro" id="IPR005475">
    <property type="entry name" value="Transketolase-like_Pyr-bd"/>
</dbReference>
<dbReference type="InterPro" id="IPR020826">
    <property type="entry name" value="Transketolase_BS"/>
</dbReference>
<dbReference type="InterPro" id="IPR033248">
    <property type="entry name" value="Transketolase_C"/>
</dbReference>
<dbReference type="InterPro" id="IPR049557">
    <property type="entry name" value="Transketolase_CS"/>
</dbReference>
<dbReference type="NCBIfam" id="TIGR00204">
    <property type="entry name" value="dxs"/>
    <property type="match status" value="1"/>
</dbReference>
<dbReference type="NCBIfam" id="NF003933">
    <property type="entry name" value="PRK05444.2-2"/>
    <property type="match status" value="1"/>
</dbReference>
<dbReference type="PANTHER" id="PTHR43322">
    <property type="entry name" value="1-D-DEOXYXYLULOSE 5-PHOSPHATE SYNTHASE-RELATED"/>
    <property type="match status" value="1"/>
</dbReference>
<dbReference type="PANTHER" id="PTHR43322:SF5">
    <property type="entry name" value="1-DEOXY-D-XYLULOSE-5-PHOSPHATE SYNTHASE, CHLOROPLASTIC"/>
    <property type="match status" value="1"/>
</dbReference>
<dbReference type="Pfam" id="PF13292">
    <property type="entry name" value="DXP_synthase_N"/>
    <property type="match status" value="1"/>
</dbReference>
<dbReference type="Pfam" id="PF02779">
    <property type="entry name" value="Transket_pyr"/>
    <property type="match status" value="1"/>
</dbReference>
<dbReference type="Pfam" id="PF02780">
    <property type="entry name" value="Transketolase_C"/>
    <property type="match status" value="1"/>
</dbReference>
<dbReference type="SMART" id="SM00861">
    <property type="entry name" value="Transket_pyr"/>
    <property type="match status" value="1"/>
</dbReference>
<dbReference type="SUPFAM" id="SSF52518">
    <property type="entry name" value="Thiamin diphosphate-binding fold (THDP-binding)"/>
    <property type="match status" value="2"/>
</dbReference>
<dbReference type="SUPFAM" id="SSF52922">
    <property type="entry name" value="TK C-terminal domain-like"/>
    <property type="match status" value="1"/>
</dbReference>
<dbReference type="PROSITE" id="PS00801">
    <property type="entry name" value="TRANSKETOLASE_1"/>
    <property type="match status" value="1"/>
</dbReference>
<dbReference type="PROSITE" id="PS00802">
    <property type="entry name" value="TRANSKETOLASE_2"/>
    <property type="match status" value="1"/>
</dbReference>